<name>CYP31_DOTSN</name>
<dbReference type="EMBL" id="KB446545">
    <property type="protein sequence ID" value="EME39477.1"/>
    <property type="molecule type" value="Genomic_DNA"/>
</dbReference>
<dbReference type="SMR" id="M2XJ44"/>
<dbReference type="STRING" id="675120.M2XJ44"/>
<dbReference type="EnsemblFungi" id="EME39477">
    <property type="protein sequence ID" value="EME39477"/>
    <property type="gene ID" value="DOTSEDRAFT_75219"/>
</dbReference>
<dbReference type="eggNOG" id="KOG0157">
    <property type="taxonomic scope" value="Eukaryota"/>
</dbReference>
<dbReference type="HOGENOM" id="CLU_083058_0_0_1"/>
<dbReference type="OMA" id="GIPENIW"/>
<dbReference type="OrthoDB" id="1470350at2759"/>
<dbReference type="Proteomes" id="UP000016933">
    <property type="component" value="Unassembled WGS sequence"/>
</dbReference>
<dbReference type="GO" id="GO:0020037">
    <property type="term" value="F:heme binding"/>
    <property type="evidence" value="ECO:0007669"/>
    <property type="project" value="InterPro"/>
</dbReference>
<dbReference type="GO" id="GO:0005506">
    <property type="term" value="F:iron ion binding"/>
    <property type="evidence" value="ECO:0007669"/>
    <property type="project" value="InterPro"/>
</dbReference>
<dbReference type="GO" id="GO:0004497">
    <property type="term" value="F:monooxygenase activity"/>
    <property type="evidence" value="ECO:0007669"/>
    <property type="project" value="InterPro"/>
</dbReference>
<dbReference type="GO" id="GO:0016705">
    <property type="term" value="F:oxidoreductase activity, acting on paired donors, with incorporation or reduction of molecular oxygen"/>
    <property type="evidence" value="ECO:0007669"/>
    <property type="project" value="InterPro"/>
</dbReference>
<dbReference type="Gene3D" id="1.10.630.10">
    <property type="entry name" value="Cytochrome P450"/>
    <property type="match status" value="1"/>
</dbReference>
<dbReference type="InterPro" id="IPR001128">
    <property type="entry name" value="Cyt_P450"/>
</dbReference>
<dbReference type="InterPro" id="IPR002403">
    <property type="entry name" value="Cyt_P450_E_grp-IV"/>
</dbReference>
<dbReference type="InterPro" id="IPR036396">
    <property type="entry name" value="Cyt_P450_sf"/>
</dbReference>
<dbReference type="InterPro" id="IPR050121">
    <property type="entry name" value="Cytochrome_P450_monoxygenase"/>
</dbReference>
<dbReference type="PANTHER" id="PTHR24305">
    <property type="entry name" value="CYTOCHROME P450"/>
    <property type="match status" value="1"/>
</dbReference>
<dbReference type="PANTHER" id="PTHR24305:SF232">
    <property type="entry name" value="P450, PUTATIVE (EUROFUNG)-RELATED"/>
    <property type="match status" value="1"/>
</dbReference>
<dbReference type="Pfam" id="PF00067">
    <property type="entry name" value="p450"/>
    <property type="match status" value="2"/>
</dbReference>
<dbReference type="PRINTS" id="PR00465">
    <property type="entry name" value="EP450IV"/>
</dbReference>
<dbReference type="PRINTS" id="PR00385">
    <property type="entry name" value="P450"/>
</dbReference>
<dbReference type="SUPFAM" id="SSF48264">
    <property type="entry name" value="Cytochrome P450"/>
    <property type="match status" value="1"/>
</dbReference>
<proteinExistence type="inferred from homology"/>
<keyword id="KW-0408">Iron</keyword>
<keyword id="KW-0479">Metal-binding</keyword>
<keyword id="KW-1185">Reference proteome</keyword>
<comment type="function">
    <text evidence="1 6">Cytochrome P450 monooxygenase; part of the hps1-dma1 gene cluster that probably mediates the biosynthesis a derivative of cyclopiazonic acid (CPA) (Probable). The hybrid polyketide synthase-nonribosomal peptide synthetase (PKS-NRPS) nps1 might incorporates acetyl-CoA, malonyl-CoA, and tryptophan (Trp) and utilizes a C-terminal redox-incompetent reductase domain to make and release the tryptophan tetramic acid, cyclo-acetoacetyl-L-tryptophan (c-AATrp), as the first intermediate in the pathway (By similarity). In addition, the cluster also includes the tryptophan dimethylallyltransferase dma1, the FAD-dependent oxidoreductase toxD, the cytochrome P450 monooxygenase cyp3.1 and the methyltransferase DOTSEDRAFT_139328; the latter 2 being not present in all CPA-producing fungi but involved in additional modifications that occur in biosynthesis the of a range of CPA and CPA-like products (Probable). Further studies are required to clarify whether the CPA-like hps1-dma1 cluster is functional or a non-functional relic reflecting evolution of D.septosporum (Probable).</text>
</comment>
<comment type="cofactor">
    <cofactor evidence="2">
        <name>heme</name>
        <dbReference type="ChEBI" id="CHEBI:30413"/>
    </cofactor>
</comment>
<comment type="pathway">
    <text evidence="6">Secondary metabolite biosynthesis.</text>
</comment>
<comment type="similarity">
    <text evidence="5">Belongs to the cytochrome P450 family.</text>
</comment>
<protein>
    <recommendedName>
        <fullName evidence="4">Hps1-dma1 cluster cytochrome P450 monooxygenase cyp3.1</fullName>
    </recommendedName>
</protein>
<gene>
    <name type="primary">cyp3.1</name>
    <name type="ORF">DOTSEDRAFT_75219</name>
</gene>
<organism>
    <name type="scientific">Dothistroma septosporum (strain NZE10 / CBS 128990)</name>
    <name type="common">Red band needle blight fungus</name>
    <name type="synonym">Mycosphaerella pini</name>
    <dbReference type="NCBI Taxonomy" id="675120"/>
    <lineage>
        <taxon>Eukaryota</taxon>
        <taxon>Fungi</taxon>
        <taxon>Dikarya</taxon>
        <taxon>Ascomycota</taxon>
        <taxon>Pezizomycotina</taxon>
        <taxon>Dothideomycetes</taxon>
        <taxon>Dothideomycetidae</taxon>
        <taxon>Mycosphaerellales</taxon>
        <taxon>Mycosphaerellaceae</taxon>
        <taxon>Dothistroma</taxon>
    </lineage>
</organism>
<accession>M2XJ44</accession>
<feature type="chain" id="PRO_0000447730" description="Hps1-dma1 cluster cytochrome P450 monooxygenase cyp3.1">
    <location>
        <begin position="1"/>
        <end position="317"/>
    </location>
</feature>
<feature type="region of interest" description="Disordered" evidence="3">
    <location>
        <begin position="183"/>
        <end position="205"/>
    </location>
</feature>
<feature type="binding site" description="axial binding residue" evidence="2">
    <location>
        <position position="260"/>
    </location>
    <ligand>
        <name>heme</name>
        <dbReference type="ChEBI" id="CHEBI:30413"/>
    </ligand>
    <ligandPart>
        <name>Fe</name>
        <dbReference type="ChEBI" id="CHEBI:18248"/>
    </ligandPart>
</feature>
<evidence type="ECO:0000250" key="1">
    <source>
        <dbReference type="UniProtKB" id="B6F209"/>
    </source>
</evidence>
<evidence type="ECO:0000250" key="2">
    <source>
        <dbReference type="UniProtKB" id="P04798"/>
    </source>
</evidence>
<evidence type="ECO:0000256" key="3">
    <source>
        <dbReference type="SAM" id="MobiDB-lite"/>
    </source>
</evidence>
<evidence type="ECO:0000303" key="4">
    <source>
    </source>
</evidence>
<evidence type="ECO:0000305" key="5"/>
<evidence type="ECO:0000305" key="6">
    <source>
    </source>
</evidence>
<sequence>MGTYYRRKDQFLLAKIHEAEARMTGEDSSGSSARIRRRSALDHFVRQEMDAAARAGRAPDFLHGPIRDELLGYIIAGHDSSTSALSWALKYLTTDARVQHALRQHLHAVHAASWREGRTPSVAEITSIRAPYLDAVIQEVFRCAYTTPFTLREATRDTQIMGHFVPKGTTVWFSTSGPSFTRPAIETDRKTSSHSRSPTALADKQRVPAWSPQDVALFRPERWLRPDPGPSDPPDFAYSHVDFNGNAGPMMAFGSGPRGCCGKRLVYLSMRILVTLVLWDFDLLPCPTRLSSDESNHGTASHPKQCYLRLATTTHGP</sequence>
<reference key="1">
    <citation type="journal article" date="2012" name="PLoS Genet.">
        <title>The genomes of the fungal plant pathogens Cladosporium fulvum and Dothistroma septosporum reveal adaptation to different hosts and lifestyles but also signatures of common ancestry.</title>
        <authorList>
            <person name="de Wit P.J.G.M."/>
            <person name="van der Burgt A."/>
            <person name="Oekmen B."/>
            <person name="Stergiopoulos I."/>
            <person name="Abd-Elsalam K.A."/>
            <person name="Aerts A.L."/>
            <person name="Bahkali A.H."/>
            <person name="Beenen H.G."/>
            <person name="Chettri P."/>
            <person name="Cox M.P."/>
            <person name="Datema E."/>
            <person name="de Vries R.P."/>
            <person name="Dhillon B."/>
            <person name="Ganley A.R."/>
            <person name="Griffiths S.A."/>
            <person name="Guo Y."/>
            <person name="Hamelin R.C."/>
            <person name="Henrissat B."/>
            <person name="Kabir M.S."/>
            <person name="Jashni M.K."/>
            <person name="Kema G."/>
            <person name="Klaubauf S."/>
            <person name="Lapidus A."/>
            <person name="Levasseur A."/>
            <person name="Lindquist E."/>
            <person name="Mehrabi R."/>
            <person name="Ohm R.A."/>
            <person name="Owen T.J."/>
            <person name="Salamov A."/>
            <person name="Schwelm A."/>
            <person name="Schijlen E."/>
            <person name="Sun H."/>
            <person name="van den Burg H.A."/>
            <person name="van Ham R.C.H.J."/>
            <person name="Zhang S."/>
            <person name="Goodwin S.B."/>
            <person name="Grigoriev I.V."/>
            <person name="Collemare J."/>
            <person name="Bradshaw R.E."/>
        </authorList>
    </citation>
    <scope>NUCLEOTIDE SEQUENCE [LARGE SCALE GENOMIC DNA]</scope>
    <source>
        <strain>NZE10 / CBS 128990</strain>
    </source>
</reference>
<reference key="2">
    <citation type="journal article" date="2012" name="PLoS Pathog.">
        <title>Diverse lifestyles and strategies of plant pathogenesis encoded in the genomes of eighteen Dothideomycetes fungi.</title>
        <authorList>
            <person name="Ohm R.A."/>
            <person name="Feau N."/>
            <person name="Henrissat B."/>
            <person name="Schoch C.L."/>
            <person name="Horwitz B.A."/>
            <person name="Barry K.W."/>
            <person name="Condon B.J."/>
            <person name="Copeland A.C."/>
            <person name="Dhillon B."/>
            <person name="Glaser F."/>
            <person name="Hesse C.N."/>
            <person name="Kosti I."/>
            <person name="LaButti K."/>
            <person name="Lindquist E.A."/>
            <person name="Lucas S."/>
            <person name="Salamov A.A."/>
            <person name="Bradshaw R.E."/>
            <person name="Ciuffetti L."/>
            <person name="Hamelin R.C."/>
            <person name="Kema G.H.J."/>
            <person name="Lawrence C."/>
            <person name="Scott J.A."/>
            <person name="Spatafora J.W."/>
            <person name="Turgeon B.G."/>
            <person name="de Wit P.J.G.M."/>
            <person name="Zhong S."/>
            <person name="Goodwin S.B."/>
            <person name="Grigoriev I.V."/>
        </authorList>
    </citation>
    <scope>NUCLEOTIDE SEQUENCE [LARGE SCALE GENOMIC DNA]</scope>
    <source>
        <strain>NZE10 / CBS 128990</strain>
    </source>
</reference>
<reference key="3">
    <citation type="journal article" date="2019" name="Fungal Biol.">
        <title>Evolutionary relics dominate the small number of secondary metabolism genes in the hemibiotrophic fungus Dothistroma septosporum.</title>
        <authorList>
            <person name="Ozturk I.K."/>
            <person name="Dupont P.Y."/>
            <person name="Chettri P."/>
            <person name="McDougal R."/>
            <person name="Boehl O.J."/>
            <person name="Cox R.J."/>
            <person name="Bradshaw R.E."/>
        </authorList>
    </citation>
    <scope>FUNCTION</scope>
    <scope>PATHWAY</scope>
</reference>